<comment type="similarity">
    <text evidence="1">Belongs to the UPF0303 family.</text>
</comment>
<evidence type="ECO:0000255" key="1">
    <source>
        <dbReference type="HAMAP-Rule" id="MF_00761"/>
    </source>
</evidence>
<evidence type="ECO:0000305" key="2"/>
<reference key="1">
    <citation type="journal article" date="1992" name="Gene">
        <title>The Rhizobium meliloti pmi gene encodes a new type of phosphomannose isomerase.</title>
        <authorList>
            <person name="Schmidt M."/>
            <person name="Arnold W."/>
            <person name="Niemann A."/>
            <person name="Kleickmann A."/>
            <person name="Puehler A."/>
        </authorList>
    </citation>
    <scope>NUCLEOTIDE SEQUENCE [GENOMIC DNA]</scope>
    <source>
        <strain>RCR2011 / SU47</strain>
    </source>
</reference>
<reference key="2">
    <citation type="journal article" date="2001" name="Proc. Natl. Acad. Sci. U.S.A.">
        <title>Analysis of the chromosome sequence of the legume symbiont Sinorhizobium meliloti strain 1021.</title>
        <authorList>
            <person name="Capela D."/>
            <person name="Barloy-Hubler F."/>
            <person name="Gouzy J."/>
            <person name="Bothe G."/>
            <person name="Ampe F."/>
            <person name="Batut J."/>
            <person name="Boistard P."/>
            <person name="Becker A."/>
            <person name="Boutry M."/>
            <person name="Cadieu E."/>
            <person name="Dreano S."/>
            <person name="Gloux S."/>
            <person name="Godrie T."/>
            <person name="Goffeau A."/>
            <person name="Kahn D."/>
            <person name="Kiss E."/>
            <person name="Lelaure V."/>
            <person name="Masuy D."/>
            <person name="Pohl T."/>
            <person name="Portetelle D."/>
            <person name="Puehler A."/>
            <person name="Purnelle B."/>
            <person name="Ramsperger U."/>
            <person name="Renard C."/>
            <person name="Thebault P."/>
            <person name="Vandenbol M."/>
            <person name="Weidner S."/>
            <person name="Galibert F."/>
        </authorList>
    </citation>
    <scope>NUCLEOTIDE SEQUENCE [LARGE SCALE GENOMIC DNA]</scope>
    <source>
        <strain>1021</strain>
    </source>
</reference>
<reference key="3">
    <citation type="journal article" date="2001" name="Science">
        <title>The composite genome of the legume symbiont Sinorhizobium meliloti.</title>
        <authorList>
            <person name="Galibert F."/>
            <person name="Finan T.M."/>
            <person name="Long S.R."/>
            <person name="Puehler A."/>
            <person name="Abola P."/>
            <person name="Ampe F."/>
            <person name="Barloy-Hubler F."/>
            <person name="Barnett M.J."/>
            <person name="Becker A."/>
            <person name="Boistard P."/>
            <person name="Bothe G."/>
            <person name="Boutry M."/>
            <person name="Bowser L."/>
            <person name="Buhrmester J."/>
            <person name="Cadieu E."/>
            <person name="Capela D."/>
            <person name="Chain P."/>
            <person name="Cowie A."/>
            <person name="Davis R.W."/>
            <person name="Dreano S."/>
            <person name="Federspiel N.A."/>
            <person name="Fisher R.F."/>
            <person name="Gloux S."/>
            <person name="Godrie T."/>
            <person name="Goffeau A."/>
            <person name="Golding B."/>
            <person name="Gouzy J."/>
            <person name="Gurjal M."/>
            <person name="Hernandez-Lucas I."/>
            <person name="Hong A."/>
            <person name="Huizar L."/>
            <person name="Hyman R.W."/>
            <person name="Jones T."/>
            <person name="Kahn D."/>
            <person name="Kahn M.L."/>
            <person name="Kalman S."/>
            <person name="Keating D.H."/>
            <person name="Kiss E."/>
            <person name="Komp C."/>
            <person name="Lelaure V."/>
            <person name="Masuy D."/>
            <person name="Palm C."/>
            <person name="Peck M.C."/>
            <person name="Pohl T.M."/>
            <person name="Portetelle D."/>
            <person name="Purnelle B."/>
            <person name="Ramsperger U."/>
            <person name="Surzycki R."/>
            <person name="Thebault P."/>
            <person name="Vandenbol M."/>
            <person name="Vorhoelter F.J."/>
            <person name="Weidner S."/>
            <person name="Wells D.H."/>
            <person name="Wong K."/>
            <person name="Yeh K.-C."/>
            <person name="Batut J."/>
        </authorList>
    </citation>
    <scope>NUCLEOTIDE SEQUENCE [LARGE SCALE GENOMIC DNA]</scope>
    <source>
        <strain>1021</strain>
    </source>
</reference>
<name>Y2983_RHIME</name>
<sequence>MNIDNDLRRIALQEQQLQFERFDLDTAWKLGATLRRMAGERKLGCVIDITLYSMQVFYAALDGATPDNPNWVRRKRNTVFRLFKSSYATGLSLLKQQTNLQAKLGLPDAEFAAHGGSFPIVVKGTGCIGAVTVSGLPQREDHNLVVEALAELLGADHDALKLES</sequence>
<protein>
    <recommendedName>
        <fullName evidence="1">UPF0303 protein R02983</fullName>
    </recommendedName>
</protein>
<accession>P29953</accession>
<proteinExistence type="inferred from homology"/>
<keyword id="KW-1185">Reference proteome</keyword>
<gene>
    <name type="ordered locus">R02983</name>
    <name type="ORF">SMc03110</name>
</gene>
<feature type="chain" id="PRO_0000208920" description="UPF0303 protein R02983">
    <location>
        <begin position="1"/>
        <end position="164"/>
    </location>
</feature>
<feature type="sequence conflict" description="In Ref. 1; AAA26355." evidence="2" ref="1">
    <original>S</original>
    <variation>T</variation>
    <location>
        <position position="86"/>
    </location>
</feature>
<dbReference type="EMBL" id="M96584">
    <property type="protein sequence ID" value="AAA26355.1"/>
    <property type="molecule type" value="Genomic_DNA"/>
</dbReference>
<dbReference type="EMBL" id="AL591688">
    <property type="protein sequence ID" value="CAC47562.1"/>
    <property type="molecule type" value="Genomic_DNA"/>
</dbReference>
<dbReference type="RefSeq" id="NP_387089.1">
    <property type="nucleotide sequence ID" value="NC_003047.1"/>
</dbReference>
<dbReference type="RefSeq" id="WP_010970333.1">
    <property type="nucleotide sequence ID" value="NC_003047.1"/>
</dbReference>
<dbReference type="SMR" id="P29953"/>
<dbReference type="EnsemblBacteria" id="CAC47562">
    <property type="protein sequence ID" value="CAC47562"/>
    <property type="gene ID" value="SMc03110"/>
</dbReference>
<dbReference type="KEGG" id="sme:SMc03110"/>
<dbReference type="PATRIC" id="fig|266834.11.peg.4509"/>
<dbReference type="eggNOG" id="COG4702">
    <property type="taxonomic scope" value="Bacteria"/>
</dbReference>
<dbReference type="HOGENOM" id="CLU_101036_2_1_5"/>
<dbReference type="OrthoDB" id="9815315at2"/>
<dbReference type="Proteomes" id="UP000001976">
    <property type="component" value="Chromosome"/>
</dbReference>
<dbReference type="Gene3D" id="3.30.450.150">
    <property type="entry name" value="Haem-degrading domain"/>
    <property type="match status" value="1"/>
</dbReference>
<dbReference type="HAMAP" id="MF_00761">
    <property type="entry name" value="UPF0303"/>
    <property type="match status" value="1"/>
</dbReference>
<dbReference type="InterPro" id="IPR005624">
    <property type="entry name" value="PduO/GlcC-like"/>
</dbReference>
<dbReference type="InterPro" id="IPR038084">
    <property type="entry name" value="PduO/GlcC-like_sf"/>
</dbReference>
<dbReference type="InterPro" id="IPR010371">
    <property type="entry name" value="YBR137W-like"/>
</dbReference>
<dbReference type="NCBIfam" id="NF002696">
    <property type="entry name" value="PRK02487.1-5"/>
    <property type="match status" value="1"/>
</dbReference>
<dbReference type="PANTHER" id="PTHR28255">
    <property type="match status" value="1"/>
</dbReference>
<dbReference type="PANTHER" id="PTHR28255:SF1">
    <property type="entry name" value="UPF0303 PROTEIN YBR137W"/>
    <property type="match status" value="1"/>
</dbReference>
<dbReference type="Pfam" id="PF03928">
    <property type="entry name" value="HbpS-like"/>
    <property type="match status" value="1"/>
</dbReference>
<dbReference type="PIRSF" id="PIRSF008757">
    <property type="entry name" value="UCP008757"/>
    <property type="match status" value="1"/>
</dbReference>
<dbReference type="SUPFAM" id="SSF143744">
    <property type="entry name" value="GlcG-like"/>
    <property type="match status" value="1"/>
</dbReference>
<organism>
    <name type="scientific">Rhizobium meliloti (strain 1021)</name>
    <name type="common">Ensifer meliloti</name>
    <name type="synonym">Sinorhizobium meliloti</name>
    <dbReference type="NCBI Taxonomy" id="266834"/>
    <lineage>
        <taxon>Bacteria</taxon>
        <taxon>Pseudomonadati</taxon>
        <taxon>Pseudomonadota</taxon>
        <taxon>Alphaproteobacteria</taxon>
        <taxon>Hyphomicrobiales</taxon>
        <taxon>Rhizobiaceae</taxon>
        <taxon>Sinorhizobium/Ensifer group</taxon>
        <taxon>Sinorhizobium</taxon>
    </lineage>
</organism>